<reference key="1">
    <citation type="submission" date="2007-08" db="EMBL/GenBank/DDBJ databases">
        <title>Complete sequence of Thermotoga lettingae TMO.</title>
        <authorList>
            <consortium name="US DOE Joint Genome Institute"/>
            <person name="Copeland A."/>
            <person name="Lucas S."/>
            <person name="Lapidus A."/>
            <person name="Barry K."/>
            <person name="Glavina del Rio T."/>
            <person name="Dalin E."/>
            <person name="Tice H."/>
            <person name="Pitluck S."/>
            <person name="Foster B."/>
            <person name="Bruce D."/>
            <person name="Schmutz J."/>
            <person name="Larimer F."/>
            <person name="Land M."/>
            <person name="Hauser L."/>
            <person name="Kyrpides N."/>
            <person name="Mikhailova N."/>
            <person name="Nelson K."/>
            <person name="Gogarten J.P."/>
            <person name="Noll K."/>
            <person name="Richardson P."/>
        </authorList>
    </citation>
    <scope>NUCLEOTIDE SEQUENCE [LARGE SCALE GENOMIC DNA]</scope>
    <source>
        <strain>ATCC BAA-301 / DSM 14385 / NBRC 107922 / TMO</strain>
    </source>
</reference>
<dbReference type="EMBL" id="CP000812">
    <property type="protein sequence ID" value="ABV34347.1"/>
    <property type="molecule type" value="Genomic_DNA"/>
</dbReference>
<dbReference type="RefSeq" id="WP_012003823.1">
    <property type="nucleotide sequence ID" value="NZ_BSDV01000001.1"/>
</dbReference>
<dbReference type="SMR" id="A8F863"/>
<dbReference type="STRING" id="416591.Tlet_1793"/>
<dbReference type="KEGG" id="tle:Tlet_1793"/>
<dbReference type="eggNOG" id="COG0233">
    <property type="taxonomic scope" value="Bacteria"/>
</dbReference>
<dbReference type="HOGENOM" id="CLU_073981_2_0_0"/>
<dbReference type="OrthoDB" id="9804006at2"/>
<dbReference type="Proteomes" id="UP000002016">
    <property type="component" value="Chromosome"/>
</dbReference>
<dbReference type="GO" id="GO:0005737">
    <property type="term" value="C:cytoplasm"/>
    <property type="evidence" value="ECO:0007669"/>
    <property type="project" value="UniProtKB-SubCell"/>
</dbReference>
<dbReference type="GO" id="GO:0043023">
    <property type="term" value="F:ribosomal large subunit binding"/>
    <property type="evidence" value="ECO:0007669"/>
    <property type="project" value="TreeGrafter"/>
</dbReference>
<dbReference type="GO" id="GO:0006415">
    <property type="term" value="P:translational termination"/>
    <property type="evidence" value="ECO:0007669"/>
    <property type="project" value="UniProtKB-UniRule"/>
</dbReference>
<dbReference type="CDD" id="cd00520">
    <property type="entry name" value="RRF"/>
    <property type="match status" value="1"/>
</dbReference>
<dbReference type="FunFam" id="1.10.132.20:FF:000001">
    <property type="entry name" value="Ribosome-recycling factor"/>
    <property type="match status" value="1"/>
</dbReference>
<dbReference type="FunFam" id="3.30.1360.40:FF:000001">
    <property type="entry name" value="Ribosome-recycling factor"/>
    <property type="match status" value="1"/>
</dbReference>
<dbReference type="Gene3D" id="3.30.1360.40">
    <property type="match status" value="1"/>
</dbReference>
<dbReference type="Gene3D" id="1.10.132.20">
    <property type="entry name" value="Ribosome-recycling factor"/>
    <property type="match status" value="1"/>
</dbReference>
<dbReference type="HAMAP" id="MF_00040">
    <property type="entry name" value="RRF"/>
    <property type="match status" value="1"/>
</dbReference>
<dbReference type="InterPro" id="IPR002661">
    <property type="entry name" value="Ribosome_recyc_fac"/>
</dbReference>
<dbReference type="InterPro" id="IPR023584">
    <property type="entry name" value="Ribosome_recyc_fac_dom"/>
</dbReference>
<dbReference type="InterPro" id="IPR036191">
    <property type="entry name" value="RRF_sf"/>
</dbReference>
<dbReference type="NCBIfam" id="TIGR00496">
    <property type="entry name" value="frr"/>
    <property type="match status" value="1"/>
</dbReference>
<dbReference type="PANTHER" id="PTHR20982:SF3">
    <property type="entry name" value="MITOCHONDRIAL RIBOSOME RECYCLING FACTOR PSEUDO 1"/>
    <property type="match status" value="1"/>
</dbReference>
<dbReference type="PANTHER" id="PTHR20982">
    <property type="entry name" value="RIBOSOME RECYCLING FACTOR"/>
    <property type="match status" value="1"/>
</dbReference>
<dbReference type="Pfam" id="PF01765">
    <property type="entry name" value="RRF"/>
    <property type="match status" value="1"/>
</dbReference>
<dbReference type="SUPFAM" id="SSF55194">
    <property type="entry name" value="Ribosome recycling factor, RRF"/>
    <property type="match status" value="1"/>
</dbReference>
<accession>A8F863</accession>
<evidence type="ECO:0000255" key="1">
    <source>
        <dbReference type="HAMAP-Rule" id="MF_00040"/>
    </source>
</evidence>
<gene>
    <name evidence="1" type="primary">frr</name>
    <name type="ordered locus">Tlet_1793</name>
</gene>
<proteinExistence type="inferred from homology"/>
<feature type="chain" id="PRO_1000057297" description="Ribosome-recycling factor">
    <location>
        <begin position="1"/>
        <end position="185"/>
    </location>
</feature>
<name>RRF_PSELT</name>
<comment type="function">
    <text evidence="1">Responsible for the release of ribosomes from messenger RNA at the termination of protein biosynthesis. May increase the efficiency of translation by recycling ribosomes from one round of translation to another.</text>
</comment>
<comment type="subcellular location">
    <subcellularLocation>
        <location evidence="1">Cytoplasm</location>
    </subcellularLocation>
</comment>
<comment type="similarity">
    <text evidence="1">Belongs to the RRF family.</text>
</comment>
<sequence length="185" mass="21290">MRHPLVKNAEDRMNKAVEKISEELRKMRTGRPSPAILEEIKVDYYGAQTPISQLATVNITEDRALIIKPWDRSVLSSIEKAIFASDLGLTPQNDGNVIRLTFPTPTTEQRQKWAKKAKEIAEQGKIAIRNIRRDILKELKGDTKDGKISEDDEKRIEKEIQDLTDKKILEIDKLLEKKEKEIMEV</sequence>
<protein>
    <recommendedName>
        <fullName evidence="1">Ribosome-recycling factor</fullName>
        <shortName evidence="1">RRF</shortName>
    </recommendedName>
    <alternativeName>
        <fullName evidence="1">Ribosome-releasing factor</fullName>
    </alternativeName>
</protein>
<keyword id="KW-0963">Cytoplasm</keyword>
<keyword id="KW-0648">Protein biosynthesis</keyword>
<keyword id="KW-1185">Reference proteome</keyword>
<organism>
    <name type="scientific">Pseudothermotoga lettingae (strain ATCC BAA-301 / DSM 14385 / NBRC 107922 / TMO)</name>
    <name type="common">Thermotoga lettingae</name>
    <dbReference type="NCBI Taxonomy" id="416591"/>
    <lineage>
        <taxon>Bacteria</taxon>
        <taxon>Thermotogati</taxon>
        <taxon>Thermotogota</taxon>
        <taxon>Thermotogae</taxon>
        <taxon>Thermotogales</taxon>
        <taxon>Thermotogaceae</taxon>
        <taxon>Pseudothermotoga</taxon>
    </lineage>
</organism>